<sequence>MKHYEVEIRDAKTREKLCFLDKVEPQATISEIKTLFTKTHPQWYPARQSLRLDPKGKSLKDEDVLQKLPVGTTATLYFRDLGAQISWVTVFLTEYAGPLFIYLLFYFRVPFIYGRKYDFTSSRHTVVHLACMCHSFHYIKRLLETLFVHRFSHGTMPLRNIFKNCTYYWGFAAWMAYYINHPLYTPPTYGVQQVKLALAVFVICQLGNFSIHMALRDLRPAGSKTRKIPYPTKNPFTWLFLLVSCPNYTYEVGSWIGFAILTQCVPVALFSLVGFTQMTIWAKGKHRSYLKEFRDYPPLRMPIIPFLL</sequence>
<protein>
    <recommendedName>
        <fullName evidence="5">Very-long-chain enoyl-CoA reductase</fullName>
        <ecNumber evidence="2">1.3.1.93</ecNumber>
    </recommendedName>
    <alternativeName>
        <fullName>Synaptic glycoprotein SC2</fullName>
    </alternativeName>
    <alternativeName>
        <fullName>Trans-2,3-enoyl-CoA reductase</fullName>
        <shortName>TER</shortName>
    </alternativeName>
</protein>
<reference key="1">
    <citation type="journal article" date="2005" name="Science">
        <title>The transcriptional landscape of the mammalian genome.</title>
        <authorList>
            <person name="Carninci P."/>
            <person name="Kasukawa T."/>
            <person name="Katayama S."/>
            <person name="Gough J."/>
            <person name="Frith M.C."/>
            <person name="Maeda N."/>
            <person name="Oyama R."/>
            <person name="Ravasi T."/>
            <person name="Lenhard B."/>
            <person name="Wells C."/>
            <person name="Kodzius R."/>
            <person name="Shimokawa K."/>
            <person name="Bajic V.B."/>
            <person name="Brenner S.E."/>
            <person name="Batalov S."/>
            <person name="Forrest A.R."/>
            <person name="Zavolan M."/>
            <person name="Davis M.J."/>
            <person name="Wilming L.G."/>
            <person name="Aidinis V."/>
            <person name="Allen J.E."/>
            <person name="Ambesi-Impiombato A."/>
            <person name="Apweiler R."/>
            <person name="Aturaliya R.N."/>
            <person name="Bailey T.L."/>
            <person name="Bansal M."/>
            <person name="Baxter L."/>
            <person name="Beisel K.W."/>
            <person name="Bersano T."/>
            <person name="Bono H."/>
            <person name="Chalk A.M."/>
            <person name="Chiu K.P."/>
            <person name="Choudhary V."/>
            <person name="Christoffels A."/>
            <person name="Clutterbuck D.R."/>
            <person name="Crowe M.L."/>
            <person name="Dalla E."/>
            <person name="Dalrymple B.P."/>
            <person name="de Bono B."/>
            <person name="Della Gatta G."/>
            <person name="di Bernardo D."/>
            <person name="Down T."/>
            <person name="Engstrom P."/>
            <person name="Fagiolini M."/>
            <person name="Faulkner G."/>
            <person name="Fletcher C.F."/>
            <person name="Fukushima T."/>
            <person name="Furuno M."/>
            <person name="Futaki S."/>
            <person name="Gariboldi M."/>
            <person name="Georgii-Hemming P."/>
            <person name="Gingeras T.R."/>
            <person name="Gojobori T."/>
            <person name="Green R.E."/>
            <person name="Gustincich S."/>
            <person name="Harbers M."/>
            <person name="Hayashi Y."/>
            <person name="Hensch T.K."/>
            <person name="Hirokawa N."/>
            <person name="Hill D."/>
            <person name="Huminiecki L."/>
            <person name="Iacono M."/>
            <person name="Ikeo K."/>
            <person name="Iwama A."/>
            <person name="Ishikawa T."/>
            <person name="Jakt M."/>
            <person name="Kanapin A."/>
            <person name="Katoh M."/>
            <person name="Kawasawa Y."/>
            <person name="Kelso J."/>
            <person name="Kitamura H."/>
            <person name="Kitano H."/>
            <person name="Kollias G."/>
            <person name="Krishnan S.P."/>
            <person name="Kruger A."/>
            <person name="Kummerfeld S.K."/>
            <person name="Kurochkin I.V."/>
            <person name="Lareau L.F."/>
            <person name="Lazarevic D."/>
            <person name="Lipovich L."/>
            <person name="Liu J."/>
            <person name="Liuni S."/>
            <person name="McWilliam S."/>
            <person name="Madan Babu M."/>
            <person name="Madera M."/>
            <person name="Marchionni L."/>
            <person name="Matsuda H."/>
            <person name="Matsuzawa S."/>
            <person name="Miki H."/>
            <person name="Mignone F."/>
            <person name="Miyake S."/>
            <person name="Morris K."/>
            <person name="Mottagui-Tabar S."/>
            <person name="Mulder N."/>
            <person name="Nakano N."/>
            <person name="Nakauchi H."/>
            <person name="Ng P."/>
            <person name="Nilsson R."/>
            <person name="Nishiguchi S."/>
            <person name="Nishikawa S."/>
            <person name="Nori F."/>
            <person name="Ohara O."/>
            <person name="Okazaki Y."/>
            <person name="Orlando V."/>
            <person name="Pang K.C."/>
            <person name="Pavan W.J."/>
            <person name="Pavesi G."/>
            <person name="Pesole G."/>
            <person name="Petrovsky N."/>
            <person name="Piazza S."/>
            <person name="Reed J."/>
            <person name="Reid J.F."/>
            <person name="Ring B.Z."/>
            <person name="Ringwald M."/>
            <person name="Rost B."/>
            <person name="Ruan Y."/>
            <person name="Salzberg S.L."/>
            <person name="Sandelin A."/>
            <person name="Schneider C."/>
            <person name="Schoenbach C."/>
            <person name="Sekiguchi K."/>
            <person name="Semple C.A."/>
            <person name="Seno S."/>
            <person name="Sessa L."/>
            <person name="Sheng Y."/>
            <person name="Shibata Y."/>
            <person name="Shimada H."/>
            <person name="Shimada K."/>
            <person name="Silva D."/>
            <person name="Sinclair B."/>
            <person name="Sperling S."/>
            <person name="Stupka E."/>
            <person name="Sugiura K."/>
            <person name="Sultana R."/>
            <person name="Takenaka Y."/>
            <person name="Taki K."/>
            <person name="Tammoja K."/>
            <person name="Tan S.L."/>
            <person name="Tang S."/>
            <person name="Taylor M.S."/>
            <person name="Tegner J."/>
            <person name="Teichmann S.A."/>
            <person name="Ueda H.R."/>
            <person name="van Nimwegen E."/>
            <person name="Verardo R."/>
            <person name="Wei C.L."/>
            <person name="Yagi K."/>
            <person name="Yamanishi H."/>
            <person name="Zabarovsky E."/>
            <person name="Zhu S."/>
            <person name="Zimmer A."/>
            <person name="Hide W."/>
            <person name="Bult C."/>
            <person name="Grimmond S.M."/>
            <person name="Teasdale R.D."/>
            <person name="Liu E.T."/>
            <person name="Brusic V."/>
            <person name="Quackenbush J."/>
            <person name="Wahlestedt C."/>
            <person name="Mattick J.S."/>
            <person name="Hume D.A."/>
            <person name="Kai C."/>
            <person name="Sasaki D."/>
            <person name="Tomaru Y."/>
            <person name="Fukuda S."/>
            <person name="Kanamori-Katayama M."/>
            <person name="Suzuki M."/>
            <person name="Aoki J."/>
            <person name="Arakawa T."/>
            <person name="Iida J."/>
            <person name="Imamura K."/>
            <person name="Itoh M."/>
            <person name="Kato T."/>
            <person name="Kawaji H."/>
            <person name="Kawagashira N."/>
            <person name="Kawashima T."/>
            <person name="Kojima M."/>
            <person name="Kondo S."/>
            <person name="Konno H."/>
            <person name="Nakano K."/>
            <person name="Ninomiya N."/>
            <person name="Nishio T."/>
            <person name="Okada M."/>
            <person name="Plessy C."/>
            <person name="Shibata K."/>
            <person name="Shiraki T."/>
            <person name="Suzuki S."/>
            <person name="Tagami M."/>
            <person name="Waki K."/>
            <person name="Watahiki A."/>
            <person name="Okamura-Oho Y."/>
            <person name="Suzuki H."/>
            <person name="Kawai J."/>
            <person name="Hayashizaki Y."/>
        </authorList>
    </citation>
    <scope>NUCLEOTIDE SEQUENCE [LARGE SCALE MRNA]</scope>
    <source>
        <strain>C57BL/6J</strain>
        <tissue>Embryonic liver</tissue>
    </source>
</reference>
<reference key="2">
    <citation type="journal article" date="2004" name="Genome Res.">
        <title>The status, quality, and expansion of the NIH full-length cDNA project: the Mammalian Gene Collection (MGC).</title>
        <authorList>
            <consortium name="The MGC Project Team"/>
        </authorList>
    </citation>
    <scope>NUCLEOTIDE SEQUENCE [LARGE SCALE MRNA]</scope>
    <source>
        <tissue>Kidney</tissue>
    </source>
</reference>
<reference key="3">
    <citation type="journal article" date="2003" name="J. Biol. Chem.">
        <title>Identification of two mammalian reductases involved in the two-carbon fatty acyl elongation cascade.</title>
        <authorList>
            <person name="Moon Y.-A."/>
            <person name="Horton J.D."/>
        </authorList>
    </citation>
    <scope>CATALYTIC ACTIVITY</scope>
</reference>
<reference key="4">
    <citation type="journal article" date="2007" name="Mol. Cell. Proteomics">
        <title>Mitochondrial phosphoproteome revealed by an improved IMAC method and MS/MS/MS.</title>
        <authorList>
            <person name="Lee J."/>
            <person name="Xu Y."/>
            <person name="Chen Y."/>
            <person name="Sprung R."/>
            <person name="Kim S.C."/>
            <person name="Xie S."/>
            <person name="Zhao Y."/>
        </authorList>
    </citation>
    <scope>PHOSPHORYLATION [LARGE SCALE ANALYSIS] AT SER-58</scope>
    <scope>IDENTIFICATION BY MASS SPECTROMETRY [LARGE SCALE ANALYSIS]</scope>
    <source>
        <tissue>Liver</tissue>
    </source>
</reference>
<reference key="5">
    <citation type="journal article" date="2010" name="Cell">
        <title>A tissue-specific atlas of mouse protein phosphorylation and expression.</title>
        <authorList>
            <person name="Huttlin E.L."/>
            <person name="Jedrychowski M.P."/>
            <person name="Elias J.E."/>
            <person name="Goswami T."/>
            <person name="Rad R."/>
            <person name="Beausoleil S.A."/>
            <person name="Villen J."/>
            <person name="Haas W."/>
            <person name="Sowa M.E."/>
            <person name="Gygi S.P."/>
        </authorList>
    </citation>
    <scope>IDENTIFICATION BY MASS SPECTROMETRY [LARGE SCALE ANALYSIS]</scope>
    <source>
        <tissue>Brain</tissue>
        <tissue>Brown adipose tissue</tissue>
        <tissue>Heart</tissue>
        <tissue>Kidney</tissue>
        <tissue>Liver</tissue>
        <tissue>Lung</tissue>
        <tissue>Pancreas</tissue>
        <tissue>Spleen</tissue>
        <tissue>Testis</tissue>
    </source>
</reference>
<reference key="6">
    <citation type="journal article" date="2013" name="Mol. Cell">
        <title>SIRT5-mediated lysine desuccinylation impacts diverse metabolic pathways.</title>
        <authorList>
            <person name="Park J."/>
            <person name="Chen Y."/>
            <person name="Tishkoff D.X."/>
            <person name="Peng C."/>
            <person name="Tan M."/>
            <person name="Dai L."/>
            <person name="Xie Z."/>
            <person name="Zhang Y."/>
            <person name="Zwaans B.M."/>
            <person name="Skinner M.E."/>
            <person name="Lombard D.B."/>
            <person name="Zhao Y."/>
        </authorList>
    </citation>
    <scope>ACETYLATION [LARGE SCALE ANALYSIS] AT LYS-60</scope>
    <scope>IDENTIFICATION BY MASS SPECTROMETRY [LARGE SCALE ANALYSIS]</scope>
    <source>
        <tissue>Embryonic fibroblast</tissue>
    </source>
</reference>
<comment type="function">
    <text evidence="2">Involved in both the production of very long-chain fatty acids for sphingolipid synthesis and the degradation of the sphingosine moiety in sphingolipids through the sphingosine 1-phosphate metabolic pathway (By similarity). Catalyzes the last of the four reactions of the long-chain fatty acids elongation cycle (By similarity). This endoplasmic reticulum-bound enzymatic process, allows the addition of 2 carbons to the chain of long- and very long-chain fatty acids/VLCFAs per cycle (By similarity). This enzyme reduces the trans-2,3-enoyl-CoA fatty acid intermediate to an acyl-CoA that can be further elongated by entering a new cycle of elongation (By similarity). Thereby, it participates in the production of VLCFAs of different chain lengths that are involved in multiple biological processes as precursors of membrane lipids and lipid mediators (By similarity). Catalyzes the saturation step of the sphingosine 1-phosphate metabolic pathway, the conversion of trans-2-hexadecenoyl-CoA to palmitoyl-CoA (By similarity).</text>
</comment>
<comment type="catalytic activity">
    <reaction evidence="2">
        <text>a very-long-chain 2,3-saturated fatty acyl-CoA + NADP(+) = a very-long-chain (2E)-enoyl-CoA + NADPH + H(+)</text>
        <dbReference type="Rhea" id="RHEA:14473"/>
        <dbReference type="ChEBI" id="CHEBI:15378"/>
        <dbReference type="ChEBI" id="CHEBI:57783"/>
        <dbReference type="ChEBI" id="CHEBI:58349"/>
        <dbReference type="ChEBI" id="CHEBI:83724"/>
        <dbReference type="ChEBI" id="CHEBI:83728"/>
        <dbReference type="EC" id="1.3.1.93"/>
    </reaction>
    <physiologicalReaction direction="right-to-left" evidence="2">
        <dbReference type="Rhea" id="RHEA:14475"/>
    </physiologicalReaction>
</comment>
<comment type="catalytic activity">
    <reaction evidence="4">
        <text>octadecanoyl-CoA + NADP(+) = (2E)-octadecenoyl-CoA + NADPH + H(+)</text>
        <dbReference type="Rhea" id="RHEA:35351"/>
        <dbReference type="ChEBI" id="CHEBI:15378"/>
        <dbReference type="ChEBI" id="CHEBI:57394"/>
        <dbReference type="ChEBI" id="CHEBI:57783"/>
        <dbReference type="ChEBI" id="CHEBI:58349"/>
        <dbReference type="ChEBI" id="CHEBI:71412"/>
    </reaction>
    <physiologicalReaction direction="right-to-left" evidence="6">
        <dbReference type="Rhea" id="RHEA:35353"/>
    </physiologicalReaction>
</comment>
<comment type="catalytic activity">
    <reaction evidence="2">
        <text>(2E,7Z,10Z,13Z,16Z)-docosapentaenoyl-CoA + NADPH + H(+) = (7Z,10Z,13Z,16Z)-docosatetraenoyl-CoA + NADP(+)</text>
        <dbReference type="Rhea" id="RHEA:39331"/>
        <dbReference type="ChEBI" id="CHEBI:15378"/>
        <dbReference type="ChEBI" id="CHEBI:57783"/>
        <dbReference type="ChEBI" id="CHEBI:58349"/>
        <dbReference type="ChEBI" id="CHEBI:73856"/>
        <dbReference type="ChEBI" id="CHEBI:76416"/>
    </reaction>
    <physiologicalReaction direction="left-to-right" evidence="2">
        <dbReference type="Rhea" id="RHEA:39332"/>
    </physiologicalReaction>
</comment>
<comment type="catalytic activity">
    <reaction evidence="2">
        <text>(2E,7Z,10Z,13Z,16Z,19Z)-docosahexaenoyl-CoA + NADPH + H(+) = (7Z,10Z,13Z,16Z,19Z)-docosapentaenoyl-CoA + NADP(+)</text>
        <dbReference type="Rhea" id="RHEA:39467"/>
        <dbReference type="ChEBI" id="CHEBI:15378"/>
        <dbReference type="ChEBI" id="CHEBI:57783"/>
        <dbReference type="ChEBI" id="CHEBI:58349"/>
        <dbReference type="ChEBI" id="CHEBI:73870"/>
        <dbReference type="ChEBI" id="CHEBI:76461"/>
    </reaction>
    <physiologicalReaction direction="left-to-right" evidence="2">
        <dbReference type="Rhea" id="RHEA:39468"/>
    </physiologicalReaction>
</comment>
<comment type="catalytic activity">
    <reaction evidence="2">
        <text>(2E,8Z,11Z,14Z)-eicosatetraenoyl-CoA + NADPH + H(+) = (8Z,11Z,14Z)-eicosatrienoyl-CoA + NADP(+)</text>
        <dbReference type="Rhea" id="RHEA:39319"/>
        <dbReference type="ChEBI" id="CHEBI:15378"/>
        <dbReference type="ChEBI" id="CHEBI:57783"/>
        <dbReference type="ChEBI" id="CHEBI:58349"/>
        <dbReference type="ChEBI" id="CHEBI:74264"/>
        <dbReference type="ChEBI" id="CHEBI:76412"/>
    </reaction>
    <physiologicalReaction direction="left-to-right" evidence="2">
        <dbReference type="Rhea" id="RHEA:39320"/>
    </physiologicalReaction>
</comment>
<comment type="catalytic activity">
    <reaction evidence="2">
        <text>(2E)-hexadecenoyl-CoA + NADPH + H(+) = hexadecanoyl-CoA + NADP(+)</text>
        <dbReference type="Rhea" id="RHEA:36143"/>
        <dbReference type="ChEBI" id="CHEBI:15378"/>
        <dbReference type="ChEBI" id="CHEBI:57379"/>
        <dbReference type="ChEBI" id="CHEBI:57783"/>
        <dbReference type="ChEBI" id="CHEBI:58349"/>
        <dbReference type="ChEBI" id="CHEBI:61526"/>
    </reaction>
    <physiologicalReaction direction="left-to-right" evidence="2">
        <dbReference type="Rhea" id="RHEA:36144"/>
    </physiologicalReaction>
</comment>
<comment type="pathway">
    <text evidence="2">Lipid metabolism; fatty acid biosynthesis.</text>
</comment>
<comment type="pathway">
    <text evidence="2">Lipid metabolism; sphingolipid metabolism.</text>
</comment>
<comment type="subunit">
    <text evidence="2">Interacts with ELOVL1 and LASS2.</text>
</comment>
<comment type="subcellular location">
    <subcellularLocation>
        <location evidence="2">Endoplasmic reticulum membrane</location>
        <topology evidence="3">Multi-pass membrane protein</topology>
    </subcellularLocation>
</comment>
<comment type="PTM">
    <text evidence="1">Glycosylated.</text>
</comment>
<comment type="similarity">
    <text evidence="5">Belongs to the steroid 5-alpha reductase family.</text>
</comment>
<dbReference type="EC" id="1.3.1.93" evidence="2"/>
<dbReference type="EMBL" id="AK010984">
    <property type="protein sequence ID" value="BAB27305.1"/>
    <property type="molecule type" value="mRNA"/>
</dbReference>
<dbReference type="EMBL" id="BC019984">
    <property type="protein sequence ID" value="AAH19984.1"/>
    <property type="molecule type" value="mRNA"/>
</dbReference>
<dbReference type="CCDS" id="CCDS40403.1"/>
<dbReference type="RefSeq" id="NP_081455.1">
    <property type="nucleotide sequence ID" value="NM_027179.1"/>
</dbReference>
<dbReference type="RefSeq" id="NP_598879.1">
    <property type="nucleotide sequence ID" value="NM_134118.5"/>
</dbReference>
<dbReference type="SMR" id="Q9CY27"/>
<dbReference type="BioGRID" id="223073">
    <property type="interactions" value="18"/>
</dbReference>
<dbReference type="FunCoup" id="Q9CY27">
    <property type="interactions" value="1899"/>
</dbReference>
<dbReference type="IntAct" id="Q9CY27">
    <property type="interactions" value="2"/>
</dbReference>
<dbReference type="MINT" id="Q9CY27"/>
<dbReference type="STRING" id="10090.ENSMUSP00000019382"/>
<dbReference type="SwissLipids" id="SLP:000000437"/>
<dbReference type="GlyCosmos" id="Q9CY27">
    <property type="glycosylation" value="2 sites, No reported glycans"/>
</dbReference>
<dbReference type="GlyGen" id="Q9CY27">
    <property type="glycosylation" value="3 sites, 1 O-linked glycan (1 site)"/>
</dbReference>
<dbReference type="iPTMnet" id="Q9CY27"/>
<dbReference type="PhosphoSitePlus" id="Q9CY27"/>
<dbReference type="SwissPalm" id="Q9CY27"/>
<dbReference type="jPOST" id="Q9CY27"/>
<dbReference type="PeptideAtlas" id="Q9CY27"/>
<dbReference type="ProteomicsDB" id="263153"/>
<dbReference type="Pumba" id="Q9CY27"/>
<dbReference type="Antibodypedia" id="26742">
    <property type="antibodies" value="135 antibodies from 23 providers"/>
</dbReference>
<dbReference type="DNASU" id="106529"/>
<dbReference type="Ensembl" id="ENSMUST00000019382.17">
    <property type="protein sequence ID" value="ENSMUSP00000019382.10"/>
    <property type="gene ID" value="ENSMUSG00000031708.18"/>
</dbReference>
<dbReference type="GeneID" id="106529"/>
<dbReference type="KEGG" id="mmu:106529"/>
<dbReference type="UCSC" id="uc009mkl.2">
    <property type="organism name" value="mouse"/>
</dbReference>
<dbReference type="AGR" id="MGI:1915408"/>
<dbReference type="CTD" id="9524"/>
<dbReference type="MGI" id="MGI:1915408">
    <property type="gene designation" value="Tecr"/>
</dbReference>
<dbReference type="VEuPathDB" id="HostDB:ENSMUSG00000031708"/>
<dbReference type="GeneTree" id="ENSGT00950000182886"/>
<dbReference type="HOGENOM" id="CLU_059260_1_0_1"/>
<dbReference type="InParanoid" id="Q9CY27"/>
<dbReference type="OMA" id="FSQSTMP"/>
<dbReference type="OrthoDB" id="7720at9989"/>
<dbReference type="PhylomeDB" id="Q9CY27"/>
<dbReference type="BRENDA" id="1.3.1.38">
    <property type="organism ID" value="3474"/>
</dbReference>
<dbReference type="Reactome" id="R-MMU-75876">
    <property type="pathway name" value="Synthesis of very long-chain fatty acyl-CoAs"/>
</dbReference>
<dbReference type="UniPathway" id="UPA00094"/>
<dbReference type="UniPathway" id="UPA00222"/>
<dbReference type="BioGRID-ORCS" id="106529">
    <property type="hits" value="22 hits in 81 CRISPR screens"/>
</dbReference>
<dbReference type="ChiTaRS" id="Tecr">
    <property type="organism name" value="mouse"/>
</dbReference>
<dbReference type="PRO" id="PR:Q9CY27"/>
<dbReference type="Proteomes" id="UP000000589">
    <property type="component" value="Chromosome 8"/>
</dbReference>
<dbReference type="RNAct" id="Q9CY27">
    <property type="molecule type" value="protein"/>
</dbReference>
<dbReference type="Bgee" id="ENSMUSG00000031708">
    <property type="expression patterns" value="Expressed in central gray substance of midbrain and 267 other cell types or tissues"/>
</dbReference>
<dbReference type="ExpressionAtlas" id="Q9CY27">
    <property type="expression patterns" value="baseline and differential"/>
</dbReference>
<dbReference type="GO" id="GO:0005783">
    <property type="term" value="C:endoplasmic reticulum"/>
    <property type="evidence" value="ECO:0000250"/>
    <property type="project" value="UniProtKB"/>
</dbReference>
<dbReference type="GO" id="GO:0005789">
    <property type="term" value="C:endoplasmic reticulum membrane"/>
    <property type="evidence" value="ECO:0000250"/>
    <property type="project" value="UniProtKB"/>
</dbReference>
<dbReference type="GO" id="GO:0102758">
    <property type="term" value="F:very-long-chain enoyl-CoA reductase activity"/>
    <property type="evidence" value="ECO:0000250"/>
    <property type="project" value="UniProtKB"/>
</dbReference>
<dbReference type="GO" id="GO:0030497">
    <property type="term" value="P:fatty acid elongation"/>
    <property type="evidence" value="ECO:0000250"/>
    <property type="project" value="UniProtKB"/>
</dbReference>
<dbReference type="GO" id="GO:0006665">
    <property type="term" value="P:sphingolipid metabolic process"/>
    <property type="evidence" value="ECO:0000250"/>
    <property type="project" value="UniProtKB"/>
</dbReference>
<dbReference type="GO" id="GO:0006694">
    <property type="term" value="P:steroid biosynthetic process"/>
    <property type="evidence" value="ECO:0007669"/>
    <property type="project" value="UniProtKB-KW"/>
</dbReference>
<dbReference type="GO" id="GO:0042761">
    <property type="term" value="P:very long-chain fatty acid biosynthetic process"/>
    <property type="evidence" value="ECO:0000250"/>
    <property type="project" value="UniProtKB"/>
</dbReference>
<dbReference type="FunFam" id="3.10.20.90:FF:000083">
    <property type="entry name" value="Trans-2,3-enoyl-CoA reductase b"/>
    <property type="match status" value="1"/>
</dbReference>
<dbReference type="Gene3D" id="3.10.20.90">
    <property type="entry name" value="Phosphatidylinositol 3-kinase Catalytic Subunit, Chain A, domain 1"/>
    <property type="match status" value="1"/>
</dbReference>
<dbReference type="InterPro" id="IPR001104">
    <property type="entry name" value="3-oxo-5_a-steroid_4-DH_C"/>
</dbReference>
<dbReference type="InterPro" id="IPR039357">
    <property type="entry name" value="SRD5A/TECR"/>
</dbReference>
<dbReference type="InterPro" id="IPR049127">
    <property type="entry name" value="TECR-like_N"/>
</dbReference>
<dbReference type="InterPro" id="IPR029071">
    <property type="entry name" value="Ubiquitin-like_domsf"/>
</dbReference>
<dbReference type="PANTHER" id="PTHR10556">
    <property type="entry name" value="3-OXO-5-ALPHA-STEROID 4-DEHYDROGENASE"/>
    <property type="match status" value="1"/>
</dbReference>
<dbReference type="PANTHER" id="PTHR10556:SF31">
    <property type="entry name" value="VERY-LONG-CHAIN ENOYL-COA REDUCTASE"/>
    <property type="match status" value="1"/>
</dbReference>
<dbReference type="Pfam" id="PF02544">
    <property type="entry name" value="Steroid_dh"/>
    <property type="match status" value="1"/>
</dbReference>
<dbReference type="Pfam" id="PF21696">
    <property type="entry name" value="TECR_N"/>
    <property type="match status" value="1"/>
</dbReference>
<dbReference type="SUPFAM" id="SSF54236">
    <property type="entry name" value="Ubiquitin-like"/>
    <property type="match status" value="1"/>
</dbReference>
<dbReference type="PROSITE" id="PS50244">
    <property type="entry name" value="S5A_REDUCTASE"/>
    <property type="match status" value="1"/>
</dbReference>
<evidence type="ECO:0000250" key="1">
    <source>
        <dbReference type="UniProtKB" id="Q64232"/>
    </source>
</evidence>
<evidence type="ECO:0000250" key="2">
    <source>
        <dbReference type="UniProtKB" id="Q9NZ01"/>
    </source>
</evidence>
<evidence type="ECO:0000255" key="3"/>
<evidence type="ECO:0000269" key="4">
    <source>
    </source>
</evidence>
<evidence type="ECO:0000305" key="5"/>
<evidence type="ECO:0000305" key="6">
    <source>
    </source>
</evidence>
<evidence type="ECO:0007744" key="7">
    <source>
    </source>
</evidence>
<evidence type="ECO:0007744" key="8">
    <source>
    </source>
</evidence>
<accession>Q9CY27</accession>
<proteinExistence type="evidence at protein level"/>
<gene>
    <name type="primary">Tecr</name>
    <name type="synonym">Gpsn2</name>
</gene>
<name>TECR_MOUSE</name>
<feature type="chain" id="PRO_0000213684" description="Very-long-chain enoyl-CoA reductase">
    <location>
        <begin position="1"/>
        <end position="308"/>
    </location>
</feature>
<feature type="topological domain" description="Cytoplasmic" evidence="2">
    <location>
        <begin position="1"/>
        <end position="86"/>
    </location>
</feature>
<feature type="transmembrane region" description="Helical" evidence="2">
    <location>
        <begin position="87"/>
        <end position="106"/>
    </location>
</feature>
<feature type="topological domain" description="Lumenal" evidence="2">
    <location>
        <begin position="107"/>
        <end position="124"/>
    </location>
</feature>
<feature type="transmembrane region" description="Helical" evidence="2">
    <location>
        <begin position="125"/>
        <end position="147"/>
    </location>
</feature>
<feature type="topological domain" description="Cytoplasmic" evidence="2">
    <location>
        <begin position="148"/>
        <end position="158"/>
    </location>
</feature>
<feature type="transmembrane region" description="Helical" evidence="2">
    <location>
        <begin position="159"/>
        <end position="180"/>
    </location>
</feature>
<feature type="topological domain" description="Lumenal" evidence="2">
    <location>
        <begin position="181"/>
        <end position="189"/>
    </location>
</feature>
<feature type="transmembrane region" description="Helical" evidence="2">
    <location>
        <begin position="190"/>
        <end position="216"/>
    </location>
</feature>
<feature type="topological domain" description="Cytoplasmic" evidence="2">
    <location>
        <begin position="217"/>
        <end position="245"/>
    </location>
</feature>
<feature type="transmembrane region" description="Helical" evidence="2">
    <location>
        <begin position="246"/>
        <end position="262"/>
    </location>
</feature>
<feature type="topological domain" description="Lumenal" evidence="2">
    <location>
        <begin position="263"/>
        <end position="264"/>
    </location>
</feature>
<feature type="transmembrane region" description="Helical" evidence="2">
    <location>
        <begin position="265"/>
        <end position="292"/>
    </location>
</feature>
<feature type="topological domain" description="Cytoplasmic" evidence="2">
    <location>
        <begin position="293"/>
        <end position="308"/>
    </location>
</feature>
<feature type="modified residue" description="N6-acetyllysine" evidence="2">
    <location>
        <position position="22"/>
    </location>
</feature>
<feature type="modified residue" description="Phosphoserine" evidence="7">
    <location>
        <position position="58"/>
    </location>
</feature>
<feature type="modified residue" description="N6-acetyllysine" evidence="8">
    <location>
        <position position="60"/>
    </location>
</feature>
<keyword id="KW-0007">Acetylation</keyword>
<keyword id="KW-0256">Endoplasmic reticulum</keyword>
<keyword id="KW-0275">Fatty acid biosynthesis</keyword>
<keyword id="KW-0276">Fatty acid metabolism</keyword>
<keyword id="KW-0444">Lipid biosynthesis</keyword>
<keyword id="KW-0443">Lipid metabolism</keyword>
<keyword id="KW-0472">Membrane</keyword>
<keyword id="KW-0521">NADP</keyword>
<keyword id="KW-0560">Oxidoreductase</keyword>
<keyword id="KW-0597">Phosphoprotein</keyword>
<keyword id="KW-1185">Reference proteome</keyword>
<keyword id="KW-0746">Sphingolipid metabolism</keyword>
<keyword id="KW-0752">Steroid biosynthesis</keyword>
<keyword id="KW-0812">Transmembrane</keyword>
<keyword id="KW-1133">Transmembrane helix</keyword>
<organism>
    <name type="scientific">Mus musculus</name>
    <name type="common">Mouse</name>
    <dbReference type="NCBI Taxonomy" id="10090"/>
    <lineage>
        <taxon>Eukaryota</taxon>
        <taxon>Metazoa</taxon>
        <taxon>Chordata</taxon>
        <taxon>Craniata</taxon>
        <taxon>Vertebrata</taxon>
        <taxon>Euteleostomi</taxon>
        <taxon>Mammalia</taxon>
        <taxon>Eutheria</taxon>
        <taxon>Euarchontoglires</taxon>
        <taxon>Glires</taxon>
        <taxon>Rodentia</taxon>
        <taxon>Myomorpha</taxon>
        <taxon>Muroidea</taxon>
        <taxon>Muridae</taxon>
        <taxon>Murinae</taxon>
        <taxon>Mus</taxon>
        <taxon>Mus</taxon>
    </lineage>
</organism>